<dbReference type="EMBL" id="AB065508">
    <property type="protein sequence ID" value="BAC05756.1"/>
    <property type="molecule type" value="Genomic_DNA"/>
</dbReference>
<dbReference type="EMBL" id="BK004312">
    <property type="protein sequence ID" value="DAA04710.1"/>
    <property type="molecule type" value="Genomic_DNA"/>
</dbReference>
<dbReference type="CCDS" id="CCDS86256.1"/>
<dbReference type="RefSeq" id="NP_001342148.1">
    <property type="nucleotide sequence ID" value="NM_001355219.1"/>
</dbReference>
<dbReference type="SMR" id="Q8NH81"/>
<dbReference type="FunCoup" id="Q8NH81">
    <property type="interactions" value="69"/>
</dbReference>
<dbReference type="STRING" id="9606.ENSP00000477445"/>
<dbReference type="GlyCosmos" id="Q8NH81">
    <property type="glycosylation" value="1 site, No reported glycans"/>
</dbReference>
<dbReference type="GlyGen" id="Q8NH81">
    <property type="glycosylation" value="1 site"/>
</dbReference>
<dbReference type="BioMuta" id="OR10G6"/>
<dbReference type="DMDM" id="74760323"/>
<dbReference type="MassIVE" id="Q8NH81"/>
<dbReference type="PaxDb" id="9606-ENSP00000477445"/>
<dbReference type="PeptideAtlas" id="Q8NH81"/>
<dbReference type="Antibodypedia" id="71798">
    <property type="antibodies" value="12 antibodies from 9 providers"/>
</dbReference>
<dbReference type="Ensembl" id="ENST00000307002.3">
    <property type="protein sequence ID" value="ENSP00000477445.1"/>
    <property type="gene ID" value="ENSG00000198674.3"/>
</dbReference>
<dbReference type="GeneID" id="79490"/>
<dbReference type="MANE-Select" id="ENST00000307002.3">
    <property type="protein sequence ID" value="ENSP00000477445.1"/>
    <property type="RefSeq nucleotide sequence ID" value="NM_001355219.1"/>
    <property type="RefSeq protein sequence ID" value="NP_001342148.1"/>
</dbReference>
<dbReference type="UCSC" id="uc058iqj.1">
    <property type="organism name" value="human"/>
</dbReference>
<dbReference type="AGR" id="HGNC:14836"/>
<dbReference type="GeneCards" id="OR10G6"/>
<dbReference type="HGNC" id="HGNC:14836">
    <property type="gene designation" value="OR10G6"/>
</dbReference>
<dbReference type="HPA" id="ENSG00000198674">
    <property type="expression patterns" value="Not detected"/>
</dbReference>
<dbReference type="neXtProt" id="NX_Q8NH81"/>
<dbReference type="VEuPathDB" id="HostDB:ENSG00000198674"/>
<dbReference type="eggNOG" id="ENOG502SI7K">
    <property type="taxonomic scope" value="Eukaryota"/>
</dbReference>
<dbReference type="GeneTree" id="ENSGT01050000244869"/>
<dbReference type="HOGENOM" id="CLU_012526_8_1_1"/>
<dbReference type="InParanoid" id="Q8NH81"/>
<dbReference type="OMA" id="MTISCAI"/>
<dbReference type="OrthoDB" id="6151005at2759"/>
<dbReference type="PAN-GO" id="Q8NH81">
    <property type="GO annotations" value="1 GO annotation based on evolutionary models"/>
</dbReference>
<dbReference type="PhylomeDB" id="Q8NH81"/>
<dbReference type="PathwayCommons" id="Q8NH81"/>
<dbReference type="Reactome" id="R-HSA-9752946">
    <property type="pathway name" value="Expression and translocation of olfactory receptors"/>
</dbReference>
<dbReference type="Pharos" id="Q8NH81">
    <property type="development level" value="Tdark"/>
</dbReference>
<dbReference type="PRO" id="PR:Q8NH81"/>
<dbReference type="Proteomes" id="UP000005640">
    <property type="component" value="Chromosome 11"/>
</dbReference>
<dbReference type="RNAct" id="Q8NH81">
    <property type="molecule type" value="protein"/>
</dbReference>
<dbReference type="ExpressionAtlas" id="Q8NH81">
    <property type="expression patterns" value="differential"/>
</dbReference>
<dbReference type="GO" id="GO:0005886">
    <property type="term" value="C:plasma membrane"/>
    <property type="evidence" value="ECO:0000318"/>
    <property type="project" value="GO_Central"/>
</dbReference>
<dbReference type="GO" id="GO:0004930">
    <property type="term" value="F:G protein-coupled receptor activity"/>
    <property type="evidence" value="ECO:0007669"/>
    <property type="project" value="UniProtKB-KW"/>
</dbReference>
<dbReference type="GO" id="GO:0004984">
    <property type="term" value="F:olfactory receptor activity"/>
    <property type="evidence" value="ECO:0000318"/>
    <property type="project" value="GO_Central"/>
</dbReference>
<dbReference type="GO" id="GO:0050911">
    <property type="term" value="P:detection of chemical stimulus involved in sensory perception of smell"/>
    <property type="evidence" value="ECO:0000318"/>
    <property type="project" value="GO_Central"/>
</dbReference>
<dbReference type="CDD" id="cd15942">
    <property type="entry name" value="7tmA_OR10G6-like"/>
    <property type="match status" value="1"/>
</dbReference>
<dbReference type="FunFam" id="1.10.1220.70:FF:000001">
    <property type="entry name" value="Olfactory receptor"/>
    <property type="match status" value="1"/>
</dbReference>
<dbReference type="FunFam" id="1.20.1070.10:FF:000001">
    <property type="entry name" value="Olfactory receptor"/>
    <property type="match status" value="1"/>
</dbReference>
<dbReference type="Gene3D" id="1.20.1070.10">
    <property type="entry name" value="Rhodopsin 7-helix transmembrane proteins"/>
    <property type="match status" value="1"/>
</dbReference>
<dbReference type="InterPro" id="IPR000276">
    <property type="entry name" value="GPCR_Rhodpsn"/>
</dbReference>
<dbReference type="InterPro" id="IPR017452">
    <property type="entry name" value="GPCR_Rhodpsn_7TM"/>
</dbReference>
<dbReference type="InterPro" id="IPR000725">
    <property type="entry name" value="Olfact_rcpt"/>
</dbReference>
<dbReference type="PANTHER" id="PTHR26453">
    <property type="entry name" value="OLFACTORY RECEPTOR"/>
    <property type="match status" value="1"/>
</dbReference>
<dbReference type="Pfam" id="PF13853">
    <property type="entry name" value="7tm_4"/>
    <property type="match status" value="1"/>
</dbReference>
<dbReference type="PRINTS" id="PR00237">
    <property type="entry name" value="GPCRRHODOPSN"/>
</dbReference>
<dbReference type="PRINTS" id="PR00245">
    <property type="entry name" value="OLFACTORYR"/>
</dbReference>
<dbReference type="SUPFAM" id="SSF81321">
    <property type="entry name" value="Family A G protein-coupled receptor-like"/>
    <property type="match status" value="1"/>
</dbReference>
<dbReference type="PROSITE" id="PS50262">
    <property type="entry name" value="G_PROTEIN_RECEP_F1_2"/>
    <property type="match status" value="1"/>
</dbReference>
<gene>
    <name type="primary">OR10G6</name>
    <name type="synonym">OR10G6P</name>
</gene>
<feature type="chain" id="PRO_0000150698" description="Olfactory receptor 10G6">
    <location>
        <begin position="1"/>
        <end position="332"/>
    </location>
</feature>
<feature type="topological domain" description="Extracellular" evidence="1">
    <location>
        <begin position="1"/>
        <end position="46"/>
    </location>
</feature>
<feature type="transmembrane region" description="Helical; Name=1" evidence="1">
    <location>
        <begin position="47"/>
        <end position="67"/>
    </location>
</feature>
<feature type="topological domain" description="Cytoplasmic" evidence="1">
    <location>
        <begin position="68"/>
        <end position="75"/>
    </location>
</feature>
<feature type="transmembrane region" description="Helical; Name=2" evidence="1">
    <location>
        <begin position="76"/>
        <end position="96"/>
    </location>
</feature>
<feature type="topological domain" description="Extracellular" evidence="1">
    <location>
        <begin position="97"/>
        <end position="120"/>
    </location>
</feature>
<feature type="transmembrane region" description="Helical; Name=3" evidence="1">
    <location>
        <begin position="121"/>
        <end position="141"/>
    </location>
</feature>
<feature type="topological domain" description="Cytoplasmic" evidence="1">
    <location>
        <begin position="142"/>
        <end position="160"/>
    </location>
</feature>
<feature type="transmembrane region" description="Helical; Name=4" evidence="1">
    <location>
        <begin position="161"/>
        <end position="181"/>
    </location>
</feature>
<feature type="topological domain" description="Extracellular" evidence="1">
    <location>
        <begin position="182"/>
        <end position="218"/>
    </location>
</feature>
<feature type="transmembrane region" description="Helical; Name=5" evidence="1">
    <location>
        <begin position="219"/>
        <end position="238"/>
    </location>
</feature>
<feature type="topological domain" description="Cytoplasmic" evidence="1">
    <location>
        <begin position="239"/>
        <end position="258"/>
    </location>
</feature>
<feature type="transmembrane region" description="Helical; Name=6" evidence="1">
    <location>
        <begin position="259"/>
        <end position="279"/>
    </location>
</feature>
<feature type="topological domain" description="Extracellular" evidence="1">
    <location>
        <begin position="280"/>
        <end position="290"/>
    </location>
</feature>
<feature type="transmembrane region" description="Helical; Name=7" evidence="1">
    <location>
        <begin position="291"/>
        <end position="311"/>
    </location>
</feature>
<feature type="topological domain" description="Cytoplasmic" evidence="1">
    <location>
        <begin position="312"/>
        <end position="332"/>
    </location>
</feature>
<feature type="glycosylation site" description="N-linked (GlcNAc...) asparagine" evidence="1">
    <location>
        <position position="26"/>
    </location>
</feature>
<feature type="disulfide bond" evidence="2">
    <location>
        <begin position="118"/>
        <end position="210"/>
    </location>
</feature>
<proteinExistence type="inferred from homology"/>
<keyword id="KW-1003">Cell membrane</keyword>
<keyword id="KW-1015">Disulfide bond</keyword>
<keyword id="KW-0297">G-protein coupled receptor</keyword>
<keyword id="KW-0325">Glycoprotein</keyword>
<keyword id="KW-0472">Membrane</keyword>
<keyword id="KW-0552">Olfaction</keyword>
<keyword id="KW-0675">Receptor</keyword>
<keyword id="KW-1185">Reference proteome</keyword>
<keyword id="KW-0716">Sensory transduction</keyword>
<keyword id="KW-0807">Transducer</keyword>
<keyword id="KW-0812">Transmembrane</keyword>
<keyword id="KW-1133">Transmembrane helix</keyword>
<sequence length="332" mass="36823">MLEGVEHLLLLLLLTDVNSKELQSGNQTSVSHFILVGLHHPPQLGAPLFLAFLVIYLLTVSGNGLIILTVLVDIRLHRPMCLFLCHLSFLDMTISCAIVPKMLAGFLLGSRIISFGGCVIQLFSFHFLGCTECFLYTLMAYDRFLAICKPLHYATIMTHRVCNSLALGTWLGGTIHSLFQTSFVFRLPFCGPNRVDYIFCDIPAMLRLACADTAINELVTFADIGFLALTCFMLILTSYGYIVAAILRIPSADGRRNAFSTCAAHLTVVIVYYVPCTFIYLRPCSQEPLDGVVAVFYTVITPLLNSIIYTLCNKEMKAALQRLGGHKEVQPH</sequence>
<organism>
    <name type="scientific">Homo sapiens</name>
    <name type="common">Human</name>
    <dbReference type="NCBI Taxonomy" id="9606"/>
    <lineage>
        <taxon>Eukaryota</taxon>
        <taxon>Metazoa</taxon>
        <taxon>Chordata</taxon>
        <taxon>Craniata</taxon>
        <taxon>Vertebrata</taxon>
        <taxon>Euteleostomi</taxon>
        <taxon>Mammalia</taxon>
        <taxon>Eutheria</taxon>
        <taxon>Euarchontoglires</taxon>
        <taxon>Primates</taxon>
        <taxon>Haplorrhini</taxon>
        <taxon>Catarrhini</taxon>
        <taxon>Hominidae</taxon>
        <taxon>Homo</taxon>
    </lineage>
</organism>
<accession>Q8NH81</accession>
<protein>
    <recommendedName>
        <fullName>Olfactory receptor 10G6</fullName>
    </recommendedName>
    <alternativeName>
        <fullName>Olfactory receptor OR11-280</fullName>
    </alternativeName>
</protein>
<name>O10G6_HUMAN</name>
<reference key="1">
    <citation type="submission" date="2001-07" db="EMBL/GenBank/DDBJ databases">
        <title>Genome-wide discovery and analysis of human seven transmembrane helix receptor genes.</title>
        <authorList>
            <person name="Suwa M."/>
            <person name="Sato T."/>
            <person name="Okouchi I."/>
            <person name="Arita M."/>
            <person name="Futami K."/>
            <person name="Matsumoto S."/>
            <person name="Tsutsumi S."/>
            <person name="Aburatani H."/>
            <person name="Asai K."/>
            <person name="Akiyama Y."/>
        </authorList>
    </citation>
    <scope>NUCLEOTIDE SEQUENCE [GENOMIC DNA]</scope>
</reference>
<reference key="2">
    <citation type="journal article" date="2004" name="Proc. Natl. Acad. Sci. U.S.A.">
        <title>The human olfactory receptor gene family.</title>
        <authorList>
            <person name="Malnic B."/>
            <person name="Godfrey P.A."/>
            <person name="Buck L.B."/>
        </authorList>
    </citation>
    <scope>IDENTIFICATION</scope>
</reference>
<reference key="3">
    <citation type="journal article" date="2004" name="Proc. Natl. Acad. Sci. U.S.A.">
        <authorList>
            <person name="Malnic B."/>
            <person name="Godfrey P.A."/>
            <person name="Buck L.B."/>
        </authorList>
    </citation>
    <scope>ERRATUM OF PUBMED:14983052</scope>
</reference>
<evidence type="ECO:0000255" key="1"/>
<evidence type="ECO:0000255" key="2">
    <source>
        <dbReference type="PROSITE-ProRule" id="PRU00521"/>
    </source>
</evidence>
<evidence type="ECO:0000305" key="3"/>
<comment type="function">
    <text evidence="3">Odorant receptor.</text>
</comment>
<comment type="subcellular location">
    <subcellularLocation>
        <location>Cell membrane</location>
        <topology>Multi-pass membrane protein</topology>
    </subcellularLocation>
</comment>
<comment type="similarity">
    <text evidence="2">Belongs to the G-protein coupled receptor 1 family.</text>
</comment>
<comment type="online information" name="Human Olfactory Receptor Data Exploratorium (HORDE)">
    <link uri="http://genome.weizmann.ac.il/horde/card/index/symbol:OR10G6"/>
</comment>